<evidence type="ECO:0000255" key="1">
    <source>
        <dbReference type="HAMAP-Rule" id="MF_00353"/>
    </source>
</evidence>
<keyword id="KW-0004">4Fe-4S</keyword>
<keyword id="KW-0067">ATP-binding</keyword>
<keyword id="KW-0149">Chlorophyll biosynthesis</keyword>
<keyword id="KW-0150">Chloroplast</keyword>
<keyword id="KW-0408">Iron</keyword>
<keyword id="KW-0411">Iron-sulfur</keyword>
<keyword id="KW-0479">Metal-binding</keyword>
<keyword id="KW-0547">Nucleotide-binding</keyword>
<keyword id="KW-0560">Oxidoreductase</keyword>
<keyword id="KW-0602">Photosynthesis</keyword>
<keyword id="KW-0934">Plastid</keyword>
<gene>
    <name evidence="1" type="primary">chlB</name>
</gene>
<proteinExistence type="inferred from homology"/>
<name>CHLB_STIHE</name>
<reference key="1">
    <citation type="journal article" date="2006" name="Mol. Genet. Genomics">
        <title>Distinctive architecture of the chloroplast genome in the chlorophycean green alga Stigeoclonium helveticum.</title>
        <authorList>
            <person name="Belanger A.-S."/>
            <person name="Brouard J.-S."/>
            <person name="Charlebois P."/>
            <person name="Otis C."/>
            <person name="Lemieux C."/>
            <person name="Turmel M."/>
        </authorList>
    </citation>
    <scope>NUCLEOTIDE SEQUENCE [LARGE SCALE GENOMIC DNA]</scope>
    <source>
        <strain>UTEX 441</strain>
    </source>
</reference>
<sequence>MKLAYWMYAGPAHIGTLRVATSFKNVHAIMHAPLGDDYFNVMRSMLERERDFTPVTTSIVDRHVLARGSQEKVVENITRKDKEELPDLILLTPTCTSSILQEDLQNFVDRAAMESKSDVLLADVNHYRVNELQAADRTLEQIVRFYIEKAQKQNNLSTTKTIKPSVNILGMFTLGFHNQHDCRELKILLNQLGITVNEVIPEGGSVLNLKNLPKAWFNIVPYREVGLMTAVYLEKEFQMPYVDITPMGIVQTESFIRQIANVLNSIDKTNSYNFDQYIDQQTIYVSQAAWFARSIDCQNLTNKKAVVFGDATHAVAMTKILVREMGIRVACAGTYCQHDADWFREQVWGFCDEVLITDDHTQVGDMIARIEPSAIFGTQMERHVGKRLDIPCGVISAPVHIQNFPLGYRPFLGYEGTNQIADLVYNSFTLGMEDHLLEIFGGHDSKEVITKSLSTDSELNWTIEATSELNKIPGFVRGKVKRNTEKFARQNKIITISIDVMYAAKESAGA</sequence>
<geneLocation type="chloroplast"/>
<feature type="chain" id="PRO_0000275262" description="Light-independent protochlorophyllide reductase subunit B">
    <location>
        <begin position="1"/>
        <end position="510"/>
    </location>
</feature>
<feature type="active site" description="Proton donor" evidence="1">
    <location>
        <position position="296"/>
    </location>
</feature>
<feature type="binding site" evidence="1">
    <location>
        <position position="36"/>
    </location>
    <ligand>
        <name>[4Fe-4S] cluster</name>
        <dbReference type="ChEBI" id="CHEBI:49883"/>
        <note>ligand shared with heterodimeric partner</note>
    </ligand>
</feature>
<feature type="binding site" evidence="1">
    <location>
        <begin position="431"/>
        <end position="432"/>
    </location>
    <ligand>
        <name>substrate</name>
    </ligand>
</feature>
<organism>
    <name type="scientific">Stigeoclonium helveticum</name>
    <name type="common">Green alga</name>
    <dbReference type="NCBI Taxonomy" id="55999"/>
    <lineage>
        <taxon>Eukaryota</taxon>
        <taxon>Viridiplantae</taxon>
        <taxon>Chlorophyta</taxon>
        <taxon>core chlorophytes</taxon>
        <taxon>Chlorophyceae</taxon>
        <taxon>OCC clade</taxon>
        <taxon>Chaetophorales</taxon>
        <taxon>Chaetophoraceae</taxon>
        <taxon>Stigeoclonium</taxon>
    </lineage>
</organism>
<comment type="function">
    <text evidence="1">Component of the dark-operative protochlorophyllide reductase (DPOR) that uses Mg-ATP and reduced ferredoxin to reduce ring D of protochlorophyllide (Pchlide) to form chlorophyllide a (Chlide). This reaction is light-independent. The NB-protein (ChlN-ChlB) is the catalytic component of the complex.</text>
</comment>
<comment type="catalytic activity">
    <reaction evidence="1">
        <text>chlorophyllide a + oxidized 2[4Fe-4S]-[ferredoxin] + 2 ADP + 2 phosphate = protochlorophyllide a + reduced 2[4Fe-4S]-[ferredoxin] + 2 ATP + 2 H2O</text>
        <dbReference type="Rhea" id="RHEA:28202"/>
        <dbReference type="Rhea" id="RHEA-COMP:10002"/>
        <dbReference type="Rhea" id="RHEA-COMP:10004"/>
        <dbReference type="ChEBI" id="CHEBI:15377"/>
        <dbReference type="ChEBI" id="CHEBI:30616"/>
        <dbReference type="ChEBI" id="CHEBI:33722"/>
        <dbReference type="ChEBI" id="CHEBI:33723"/>
        <dbReference type="ChEBI" id="CHEBI:43474"/>
        <dbReference type="ChEBI" id="CHEBI:83348"/>
        <dbReference type="ChEBI" id="CHEBI:83350"/>
        <dbReference type="ChEBI" id="CHEBI:456216"/>
        <dbReference type="EC" id="1.3.7.7"/>
    </reaction>
</comment>
<comment type="cofactor">
    <cofactor evidence="1">
        <name>[4Fe-4S] cluster</name>
        <dbReference type="ChEBI" id="CHEBI:49883"/>
    </cofactor>
    <text evidence="1">Binds 1 [4Fe-4S] cluster per heterodimer. The cluster is bound at the heterodimer interface by residues from both subunits.</text>
</comment>
<comment type="pathway">
    <text evidence="1">Porphyrin-containing compound metabolism; chlorophyll biosynthesis (light-independent).</text>
</comment>
<comment type="subunit">
    <text evidence="1">Protochlorophyllide reductase is composed of three subunits; ChlL, ChlN and ChlB. Forms a heterotetramer of two ChlB and two ChlN subunits.</text>
</comment>
<comment type="subcellular location">
    <subcellularLocation>
        <location>Plastid</location>
        <location>Chloroplast</location>
    </subcellularLocation>
</comment>
<comment type="similarity">
    <text evidence="1">Belongs to the ChlB/BchB/BchZ family.</text>
</comment>
<dbReference type="EC" id="1.3.7.7" evidence="1"/>
<dbReference type="EMBL" id="DQ630521">
    <property type="protein sequence ID" value="ABF60154.1"/>
    <property type="molecule type" value="Genomic_DNA"/>
</dbReference>
<dbReference type="RefSeq" id="YP_764421.1">
    <property type="nucleotide sequence ID" value="NC_008372.1"/>
</dbReference>
<dbReference type="SMR" id="Q06SE5"/>
<dbReference type="GeneID" id="4308397"/>
<dbReference type="UniPathway" id="UPA00670"/>
<dbReference type="GO" id="GO:0009507">
    <property type="term" value="C:chloroplast"/>
    <property type="evidence" value="ECO:0007669"/>
    <property type="project" value="UniProtKB-SubCell"/>
</dbReference>
<dbReference type="GO" id="GO:0051539">
    <property type="term" value="F:4 iron, 4 sulfur cluster binding"/>
    <property type="evidence" value="ECO:0007669"/>
    <property type="project" value="UniProtKB-UniRule"/>
</dbReference>
<dbReference type="GO" id="GO:0005524">
    <property type="term" value="F:ATP binding"/>
    <property type="evidence" value="ECO:0007669"/>
    <property type="project" value="UniProtKB-UniRule"/>
</dbReference>
<dbReference type="GO" id="GO:0046872">
    <property type="term" value="F:metal ion binding"/>
    <property type="evidence" value="ECO:0007669"/>
    <property type="project" value="UniProtKB-KW"/>
</dbReference>
<dbReference type="GO" id="GO:0016730">
    <property type="term" value="F:oxidoreductase activity, acting on iron-sulfur proteins as donors"/>
    <property type="evidence" value="ECO:0007669"/>
    <property type="project" value="InterPro"/>
</dbReference>
<dbReference type="GO" id="GO:0016636">
    <property type="term" value="F:oxidoreductase activity, acting on the CH-CH group of donors, iron-sulfur protein as acceptor"/>
    <property type="evidence" value="ECO:0007669"/>
    <property type="project" value="UniProtKB-UniRule"/>
</dbReference>
<dbReference type="GO" id="GO:0036068">
    <property type="term" value="P:light-independent chlorophyll biosynthetic process"/>
    <property type="evidence" value="ECO:0007669"/>
    <property type="project" value="UniProtKB-UniRule"/>
</dbReference>
<dbReference type="GO" id="GO:0019685">
    <property type="term" value="P:photosynthesis, dark reaction"/>
    <property type="evidence" value="ECO:0007669"/>
    <property type="project" value="InterPro"/>
</dbReference>
<dbReference type="CDD" id="cd01981">
    <property type="entry name" value="Pchlide_reductase_B"/>
    <property type="match status" value="1"/>
</dbReference>
<dbReference type="Gene3D" id="1.20.89.20">
    <property type="match status" value="1"/>
</dbReference>
<dbReference type="Gene3D" id="3.40.50.1980">
    <property type="entry name" value="Nitrogenase molybdenum iron protein domain"/>
    <property type="match status" value="3"/>
</dbReference>
<dbReference type="Gene3D" id="1.10.8.550">
    <property type="entry name" value="Proto-chlorophyllide reductase 57 kD subunit B"/>
    <property type="match status" value="1"/>
</dbReference>
<dbReference type="HAMAP" id="MF_00353">
    <property type="entry name" value="ChlB_BchB"/>
    <property type="match status" value="1"/>
</dbReference>
<dbReference type="InterPro" id="IPR050152">
    <property type="entry name" value="ChlB/BchB/BchZ"/>
</dbReference>
<dbReference type="InterPro" id="IPR013580">
    <property type="entry name" value="LI-POR_suB-like_C"/>
</dbReference>
<dbReference type="InterPro" id="IPR000510">
    <property type="entry name" value="Nase/OxRdtase_comp1"/>
</dbReference>
<dbReference type="InterPro" id="IPR042298">
    <property type="entry name" value="P-CP_red_C"/>
</dbReference>
<dbReference type="InterPro" id="IPR005969">
    <property type="entry name" value="Protochl_reductB"/>
</dbReference>
<dbReference type="InterPro" id="IPR016209">
    <property type="entry name" value="Protochlorophyllide_Rdtase"/>
</dbReference>
<dbReference type="NCBIfam" id="TIGR01278">
    <property type="entry name" value="DPOR_BchB"/>
    <property type="match status" value="1"/>
</dbReference>
<dbReference type="PANTHER" id="PTHR33712">
    <property type="entry name" value="LIGHT-INDEPENDENT PROTOCHLOROPHYLLIDE REDUCTASE SUBUNIT B"/>
    <property type="match status" value="1"/>
</dbReference>
<dbReference type="PANTHER" id="PTHR33712:SF7">
    <property type="entry name" value="LIGHT-INDEPENDENT PROTOCHLOROPHYLLIDE REDUCTASE SUBUNIT B"/>
    <property type="match status" value="1"/>
</dbReference>
<dbReference type="Pfam" id="PF00148">
    <property type="entry name" value="Oxidored_nitro"/>
    <property type="match status" value="1"/>
</dbReference>
<dbReference type="Pfam" id="PF08369">
    <property type="entry name" value="PCP_red"/>
    <property type="match status" value="1"/>
</dbReference>
<dbReference type="PIRSF" id="PIRSF000163">
    <property type="entry name" value="PCP_ChlB"/>
    <property type="match status" value="1"/>
</dbReference>
<dbReference type="SUPFAM" id="SSF53807">
    <property type="entry name" value="Helical backbone' metal receptor"/>
    <property type="match status" value="1"/>
</dbReference>
<protein>
    <recommendedName>
        <fullName evidence="1">Light-independent protochlorophyllide reductase subunit B</fullName>
        <shortName evidence="1">DPOR subunit B</shortName>
        <shortName evidence="1">LI-POR subunit B</shortName>
        <ecNumber evidence="1">1.3.7.7</ecNumber>
    </recommendedName>
</protein>
<accession>Q06SE5</accession>